<name>GLNH_ECO57</name>
<protein>
    <recommendedName>
        <fullName>Glutamine-binding periplasmic protein</fullName>
        <shortName>GlnBP</shortName>
    </recommendedName>
</protein>
<comment type="function">
    <text evidence="1">Involved in a glutamine-transport system GlnHPQ.</text>
</comment>
<comment type="subcellular location">
    <subcellularLocation>
        <location evidence="1">Periplasm</location>
    </subcellularLocation>
</comment>
<comment type="induction">
    <text evidence="1">By lack of glutamine.</text>
</comment>
<comment type="similarity">
    <text evidence="2">Belongs to the bacterial solute-binding protein 3 family.</text>
</comment>
<feature type="signal peptide" evidence="1">
    <location>
        <begin position="1"/>
        <end position="22"/>
    </location>
</feature>
<feature type="chain" id="PRO_0000045051" description="Glutamine-binding periplasmic protein">
    <location>
        <begin position="23"/>
        <end position="248"/>
    </location>
</feature>
<dbReference type="EMBL" id="AE005174">
    <property type="protein sequence ID" value="AAG55183.1"/>
    <property type="molecule type" value="Genomic_DNA"/>
</dbReference>
<dbReference type="EMBL" id="BA000007">
    <property type="protein sequence ID" value="BAB34312.1"/>
    <property type="molecule type" value="Genomic_DNA"/>
</dbReference>
<dbReference type="PIR" id="A90740">
    <property type="entry name" value="A90740"/>
</dbReference>
<dbReference type="PIR" id="C85590">
    <property type="entry name" value="C85590"/>
</dbReference>
<dbReference type="RefSeq" id="NP_308916.1">
    <property type="nucleotide sequence ID" value="NC_002695.1"/>
</dbReference>
<dbReference type="RefSeq" id="WP_000843866.1">
    <property type="nucleotide sequence ID" value="NZ_VOAI01000006.1"/>
</dbReference>
<dbReference type="BMRB" id="P0AEQ5"/>
<dbReference type="SMR" id="P0AEQ5"/>
<dbReference type="STRING" id="155864.Z1033"/>
<dbReference type="GeneID" id="917628"/>
<dbReference type="GeneID" id="93776617"/>
<dbReference type="KEGG" id="ece:Z1033"/>
<dbReference type="KEGG" id="ecs:ECs_0889"/>
<dbReference type="PATRIC" id="fig|386585.9.peg.1003"/>
<dbReference type="eggNOG" id="COG0834">
    <property type="taxonomic scope" value="Bacteria"/>
</dbReference>
<dbReference type="HOGENOM" id="CLU_019602_18_2_6"/>
<dbReference type="OMA" id="IFATYSI"/>
<dbReference type="Proteomes" id="UP000000558">
    <property type="component" value="Chromosome"/>
</dbReference>
<dbReference type="Proteomes" id="UP000002519">
    <property type="component" value="Chromosome"/>
</dbReference>
<dbReference type="GO" id="GO:0016020">
    <property type="term" value="C:membrane"/>
    <property type="evidence" value="ECO:0007669"/>
    <property type="project" value="InterPro"/>
</dbReference>
<dbReference type="GO" id="GO:0030288">
    <property type="term" value="C:outer membrane-bounded periplasmic space"/>
    <property type="evidence" value="ECO:0007669"/>
    <property type="project" value="UniProtKB-ARBA"/>
</dbReference>
<dbReference type="GO" id="GO:0015276">
    <property type="term" value="F:ligand-gated monoatomic ion channel activity"/>
    <property type="evidence" value="ECO:0007669"/>
    <property type="project" value="InterPro"/>
</dbReference>
<dbReference type="GO" id="GO:0006865">
    <property type="term" value="P:amino acid transport"/>
    <property type="evidence" value="ECO:0007669"/>
    <property type="project" value="UniProtKB-KW"/>
</dbReference>
<dbReference type="CDD" id="cd00994">
    <property type="entry name" value="PBP2_GlnH"/>
    <property type="match status" value="1"/>
</dbReference>
<dbReference type="FunFam" id="3.40.190.10:FF:000063">
    <property type="entry name" value="Glutamine ABC transporter, periplasmic protein"/>
    <property type="match status" value="1"/>
</dbReference>
<dbReference type="Gene3D" id="3.40.190.10">
    <property type="entry name" value="Periplasmic binding protein-like II"/>
    <property type="match status" value="2"/>
</dbReference>
<dbReference type="InterPro" id="IPR001320">
    <property type="entry name" value="Iontro_rcpt_C"/>
</dbReference>
<dbReference type="InterPro" id="IPR044132">
    <property type="entry name" value="PBP2_GlnH"/>
</dbReference>
<dbReference type="InterPro" id="IPR018313">
    <property type="entry name" value="SBP_3_CS"/>
</dbReference>
<dbReference type="InterPro" id="IPR001638">
    <property type="entry name" value="Solute-binding_3/MltF_N"/>
</dbReference>
<dbReference type="NCBIfam" id="NF007029">
    <property type="entry name" value="PRK09495.1"/>
    <property type="match status" value="1"/>
</dbReference>
<dbReference type="PANTHER" id="PTHR35936:SF38">
    <property type="entry name" value="GLUTAMINE-BINDING PERIPLASMIC PROTEIN"/>
    <property type="match status" value="1"/>
</dbReference>
<dbReference type="PANTHER" id="PTHR35936">
    <property type="entry name" value="MEMBRANE-BOUND LYTIC MUREIN TRANSGLYCOSYLASE F"/>
    <property type="match status" value="1"/>
</dbReference>
<dbReference type="Pfam" id="PF00497">
    <property type="entry name" value="SBP_bac_3"/>
    <property type="match status" value="1"/>
</dbReference>
<dbReference type="SMART" id="SM00062">
    <property type="entry name" value="PBPb"/>
    <property type="match status" value="1"/>
</dbReference>
<dbReference type="SMART" id="SM00079">
    <property type="entry name" value="PBPe"/>
    <property type="match status" value="1"/>
</dbReference>
<dbReference type="SUPFAM" id="SSF53850">
    <property type="entry name" value="Periplasmic binding protein-like II"/>
    <property type="match status" value="1"/>
</dbReference>
<dbReference type="PROSITE" id="PS01039">
    <property type="entry name" value="SBP_BACTERIAL_3"/>
    <property type="match status" value="1"/>
</dbReference>
<proteinExistence type="inferred from homology"/>
<reference key="1">
    <citation type="journal article" date="2001" name="Nature">
        <title>Genome sequence of enterohaemorrhagic Escherichia coli O157:H7.</title>
        <authorList>
            <person name="Perna N.T."/>
            <person name="Plunkett G. III"/>
            <person name="Burland V."/>
            <person name="Mau B."/>
            <person name="Glasner J.D."/>
            <person name="Rose D.J."/>
            <person name="Mayhew G.F."/>
            <person name="Evans P.S."/>
            <person name="Gregor J."/>
            <person name="Kirkpatrick H.A."/>
            <person name="Posfai G."/>
            <person name="Hackett J."/>
            <person name="Klink S."/>
            <person name="Boutin A."/>
            <person name="Shao Y."/>
            <person name="Miller L."/>
            <person name="Grotbeck E.J."/>
            <person name="Davis N.W."/>
            <person name="Lim A."/>
            <person name="Dimalanta E.T."/>
            <person name="Potamousis K."/>
            <person name="Apodaca J."/>
            <person name="Anantharaman T.S."/>
            <person name="Lin J."/>
            <person name="Yen G."/>
            <person name="Schwartz D.C."/>
            <person name="Welch R.A."/>
            <person name="Blattner F.R."/>
        </authorList>
    </citation>
    <scope>NUCLEOTIDE SEQUENCE [LARGE SCALE GENOMIC DNA]</scope>
    <source>
        <strain>O157:H7 / EDL933 / ATCC 700927 / EHEC</strain>
    </source>
</reference>
<reference key="2">
    <citation type="journal article" date="2001" name="DNA Res.">
        <title>Complete genome sequence of enterohemorrhagic Escherichia coli O157:H7 and genomic comparison with a laboratory strain K-12.</title>
        <authorList>
            <person name="Hayashi T."/>
            <person name="Makino K."/>
            <person name="Ohnishi M."/>
            <person name="Kurokawa K."/>
            <person name="Ishii K."/>
            <person name="Yokoyama K."/>
            <person name="Han C.-G."/>
            <person name="Ohtsubo E."/>
            <person name="Nakayama K."/>
            <person name="Murata T."/>
            <person name="Tanaka M."/>
            <person name="Tobe T."/>
            <person name="Iida T."/>
            <person name="Takami H."/>
            <person name="Honda T."/>
            <person name="Sasakawa C."/>
            <person name="Ogasawara N."/>
            <person name="Yasunaga T."/>
            <person name="Kuhara S."/>
            <person name="Shiba T."/>
            <person name="Hattori M."/>
            <person name="Shinagawa H."/>
        </authorList>
    </citation>
    <scope>NUCLEOTIDE SEQUENCE [LARGE SCALE GENOMIC DNA]</scope>
    <source>
        <strain>O157:H7 / Sakai / RIMD 0509952 / EHEC</strain>
    </source>
</reference>
<keyword id="KW-0029">Amino-acid transport</keyword>
<keyword id="KW-0574">Periplasm</keyword>
<keyword id="KW-1185">Reference proteome</keyword>
<keyword id="KW-0732">Signal</keyword>
<keyword id="KW-0813">Transport</keyword>
<sequence>MKSVLKVSLAALTLAFAVSSHAADKKLVVATDTAFVPFEFKQGDKYVGFDVDLWAAIAKELKLDYELKPMDFSGIIPALQTKNVDLALAGITITDERKKAIDFSDGYYKSGLLVMVKANNNDVKSVKDLDGKVVAVKSGTGSVDYAKANIKTKDLRQFPNIDNAYMELGTNRADAVLHDTPNILYFIKTAGNGQFKAVGDSLEAQQYGIAFPKGSDELRDKVNGALKTLRENGTYNEIYKKWFGTEPK</sequence>
<organism>
    <name type="scientific">Escherichia coli O157:H7</name>
    <dbReference type="NCBI Taxonomy" id="83334"/>
    <lineage>
        <taxon>Bacteria</taxon>
        <taxon>Pseudomonadati</taxon>
        <taxon>Pseudomonadota</taxon>
        <taxon>Gammaproteobacteria</taxon>
        <taxon>Enterobacterales</taxon>
        <taxon>Enterobacteriaceae</taxon>
        <taxon>Escherichia</taxon>
    </lineage>
</organism>
<gene>
    <name type="primary">glnH</name>
    <name type="ordered locus">Z1033</name>
    <name type="ordered locus">ECs0889</name>
</gene>
<accession>P0AEQ5</accession>
<accession>P10344</accession>
<evidence type="ECO:0000250" key="1"/>
<evidence type="ECO:0000305" key="2"/>